<keyword id="KW-0963">Cytoplasm</keyword>
<keyword id="KW-0479">Metal-binding</keyword>
<keyword id="KW-0520">NAD</keyword>
<keyword id="KW-0808">Transferase</keyword>
<keyword id="KW-0862">Zinc</keyword>
<reference key="1">
    <citation type="journal article" date="2006" name="J. Bacteriol.">
        <title>Pathogenomic sequence analysis of Bacillus cereus and Bacillus thuringiensis isolates closely related to Bacillus anthracis.</title>
        <authorList>
            <person name="Han C.S."/>
            <person name="Xie G."/>
            <person name="Challacombe J.F."/>
            <person name="Altherr M.R."/>
            <person name="Bhotika S.S."/>
            <person name="Bruce D."/>
            <person name="Campbell C.S."/>
            <person name="Campbell M.L."/>
            <person name="Chen J."/>
            <person name="Chertkov O."/>
            <person name="Cleland C."/>
            <person name="Dimitrijevic M."/>
            <person name="Doggett N.A."/>
            <person name="Fawcett J.J."/>
            <person name="Glavina T."/>
            <person name="Goodwin L.A."/>
            <person name="Hill K.K."/>
            <person name="Hitchcock P."/>
            <person name="Jackson P.J."/>
            <person name="Keim P."/>
            <person name="Kewalramani A.R."/>
            <person name="Longmire J."/>
            <person name="Lucas S."/>
            <person name="Malfatti S."/>
            <person name="McMurry K."/>
            <person name="Meincke L.J."/>
            <person name="Misra M."/>
            <person name="Moseman B.L."/>
            <person name="Mundt M."/>
            <person name="Munk A.C."/>
            <person name="Okinaka R.T."/>
            <person name="Parson-Quintana B."/>
            <person name="Reilly L.P."/>
            <person name="Richardson P."/>
            <person name="Robinson D.L."/>
            <person name="Rubin E."/>
            <person name="Saunders E."/>
            <person name="Tapia R."/>
            <person name="Tesmer J.G."/>
            <person name="Thayer N."/>
            <person name="Thompson L.S."/>
            <person name="Tice H."/>
            <person name="Ticknor L.O."/>
            <person name="Wills P.L."/>
            <person name="Brettin T.S."/>
            <person name="Gilna P."/>
        </authorList>
    </citation>
    <scope>NUCLEOTIDE SEQUENCE [LARGE SCALE GENOMIC DNA]</scope>
    <source>
        <strain>ZK / E33L</strain>
    </source>
</reference>
<sequence length="245" mass="27976">MIFVQQFEEVRLILEKAKKITVLTGAGASTESGIPDFRSANGLYADANVEMYLSRGYYNRSPKEFWKHYKEIFQINTFHQYKPNRGHRFLAELEEQGKDITILTQNIDGLHQVGGSKHVIDLHGTLQTAHCPKCKTGYDLQYMIDHEVPRCQKCNFILNPDVVLYGDTLPQYQNAVKRLYETDVLIVMGTSLKVQPVASFPEIAKREVGATTVLVNEELTGQEYNFDYVFQNKIGEFVEGLSSRK</sequence>
<gene>
    <name evidence="1" type="primary">cobB</name>
    <name type="ordered locus">BCE33L2804</name>
</gene>
<evidence type="ECO:0000255" key="1">
    <source>
        <dbReference type="HAMAP-Rule" id="MF_01968"/>
    </source>
</evidence>
<evidence type="ECO:0000255" key="2">
    <source>
        <dbReference type="PROSITE-ProRule" id="PRU00236"/>
    </source>
</evidence>
<accession>Q639M6</accession>
<comment type="function">
    <text evidence="1">NAD-dependent protein deacetylase which modulates the activities of several enzymes which are inactive in their acetylated form.</text>
</comment>
<comment type="catalytic activity">
    <reaction evidence="1">
        <text>N(6)-acetyl-L-lysyl-[protein] + NAD(+) + H2O = 2''-O-acetyl-ADP-D-ribose + nicotinamide + L-lysyl-[protein]</text>
        <dbReference type="Rhea" id="RHEA:43636"/>
        <dbReference type="Rhea" id="RHEA-COMP:9752"/>
        <dbReference type="Rhea" id="RHEA-COMP:10731"/>
        <dbReference type="ChEBI" id="CHEBI:15377"/>
        <dbReference type="ChEBI" id="CHEBI:17154"/>
        <dbReference type="ChEBI" id="CHEBI:29969"/>
        <dbReference type="ChEBI" id="CHEBI:57540"/>
        <dbReference type="ChEBI" id="CHEBI:61930"/>
        <dbReference type="ChEBI" id="CHEBI:83767"/>
        <dbReference type="EC" id="2.3.1.286"/>
    </reaction>
</comment>
<comment type="cofactor">
    <cofactor evidence="1">
        <name>Zn(2+)</name>
        <dbReference type="ChEBI" id="CHEBI:29105"/>
    </cofactor>
    <text evidence="1">Binds 1 zinc ion per subunit.</text>
</comment>
<comment type="subcellular location">
    <subcellularLocation>
        <location evidence="1">Cytoplasm</location>
    </subcellularLocation>
</comment>
<comment type="similarity">
    <text evidence="1">Belongs to the sirtuin family. Class U subfamily.</text>
</comment>
<protein>
    <recommendedName>
        <fullName evidence="1">NAD-dependent protein deacetylase</fullName>
        <ecNumber evidence="1 2">2.3.1.286</ecNumber>
    </recommendedName>
    <alternativeName>
        <fullName evidence="1">Regulatory protein SIR2 homolog</fullName>
    </alternativeName>
</protein>
<dbReference type="EC" id="2.3.1.286" evidence="1 2"/>
<dbReference type="EMBL" id="CP000001">
    <property type="protein sequence ID" value="AAU17455.1"/>
    <property type="molecule type" value="Genomic_DNA"/>
</dbReference>
<dbReference type="SMR" id="Q639M6"/>
<dbReference type="KEGG" id="bcz:BCE33L2804"/>
<dbReference type="Proteomes" id="UP000002612">
    <property type="component" value="Chromosome"/>
</dbReference>
<dbReference type="GO" id="GO:0005737">
    <property type="term" value="C:cytoplasm"/>
    <property type="evidence" value="ECO:0007669"/>
    <property type="project" value="UniProtKB-SubCell"/>
</dbReference>
<dbReference type="GO" id="GO:0017136">
    <property type="term" value="F:histone deacetylase activity, NAD-dependent"/>
    <property type="evidence" value="ECO:0007669"/>
    <property type="project" value="TreeGrafter"/>
</dbReference>
<dbReference type="GO" id="GO:0070403">
    <property type="term" value="F:NAD+ binding"/>
    <property type="evidence" value="ECO:0007669"/>
    <property type="project" value="UniProtKB-UniRule"/>
</dbReference>
<dbReference type="GO" id="GO:0008270">
    <property type="term" value="F:zinc ion binding"/>
    <property type="evidence" value="ECO:0007669"/>
    <property type="project" value="UniProtKB-UniRule"/>
</dbReference>
<dbReference type="CDD" id="cd01413">
    <property type="entry name" value="SIR2_Af2"/>
    <property type="match status" value="1"/>
</dbReference>
<dbReference type="Gene3D" id="3.30.1600.10">
    <property type="entry name" value="SIR2/SIRT2 'Small Domain"/>
    <property type="match status" value="1"/>
</dbReference>
<dbReference type="Gene3D" id="3.40.50.1220">
    <property type="entry name" value="TPP-binding domain"/>
    <property type="match status" value="1"/>
</dbReference>
<dbReference type="HAMAP" id="MF_01968">
    <property type="entry name" value="Sirtuin_ClassU"/>
    <property type="match status" value="1"/>
</dbReference>
<dbReference type="InterPro" id="IPR029035">
    <property type="entry name" value="DHS-like_NAD/FAD-binding_dom"/>
</dbReference>
<dbReference type="InterPro" id="IPR050134">
    <property type="entry name" value="NAD-dep_sirtuin_deacylases"/>
</dbReference>
<dbReference type="InterPro" id="IPR003000">
    <property type="entry name" value="Sirtuin"/>
</dbReference>
<dbReference type="InterPro" id="IPR026591">
    <property type="entry name" value="Sirtuin_cat_small_dom_sf"/>
</dbReference>
<dbReference type="InterPro" id="IPR028628">
    <property type="entry name" value="Sirtuin_class_U"/>
</dbReference>
<dbReference type="InterPro" id="IPR026590">
    <property type="entry name" value="Ssirtuin_cat_dom"/>
</dbReference>
<dbReference type="NCBIfam" id="NF001752">
    <property type="entry name" value="PRK00481.1-1"/>
    <property type="match status" value="1"/>
</dbReference>
<dbReference type="NCBIfam" id="NF001754">
    <property type="entry name" value="PRK00481.1-4"/>
    <property type="match status" value="1"/>
</dbReference>
<dbReference type="PANTHER" id="PTHR11085:SF4">
    <property type="entry name" value="NAD-DEPENDENT PROTEIN DEACYLASE"/>
    <property type="match status" value="1"/>
</dbReference>
<dbReference type="PANTHER" id="PTHR11085">
    <property type="entry name" value="NAD-DEPENDENT PROTEIN DEACYLASE SIRTUIN-5, MITOCHONDRIAL-RELATED"/>
    <property type="match status" value="1"/>
</dbReference>
<dbReference type="Pfam" id="PF02146">
    <property type="entry name" value="SIR2"/>
    <property type="match status" value="1"/>
</dbReference>
<dbReference type="SUPFAM" id="SSF52467">
    <property type="entry name" value="DHS-like NAD/FAD-binding domain"/>
    <property type="match status" value="1"/>
</dbReference>
<dbReference type="PROSITE" id="PS50305">
    <property type="entry name" value="SIRTUIN"/>
    <property type="match status" value="1"/>
</dbReference>
<proteinExistence type="inferred from homology"/>
<name>NPD_BACCZ</name>
<feature type="chain" id="PRO_0000110290" description="NAD-dependent protein deacetylase">
    <location>
        <begin position="1"/>
        <end position="245"/>
    </location>
</feature>
<feature type="domain" description="Deacetylase sirtuin-type" evidence="2">
    <location>
        <begin position="1"/>
        <end position="245"/>
    </location>
</feature>
<feature type="active site" description="Proton acceptor" evidence="2">
    <location>
        <position position="123"/>
    </location>
</feature>
<feature type="binding site" evidence="1">
    <location>
        <position position="26"/>
    </location>
    <ligand>
        <name>NAD(+)</name>
        <dbReference type="ChEBI" id="CHEBI:57540"/>
    </ligand>
</feature>
<feature type="binding site" evidence="1">
    <location>
        <position position="30"/>
    </location>
    <ligand>
        <name>NAD(+)</name>
        <dbReference type="ChEBI" id="CHEBI:57540"/>
    </ligand>
</feature>
<feature type="binding site" evidence="1">
    <location>
        <position position="37"/>
    </location>
    <ligand>
        <name>NAD(+)</name>
        <dbReference type="ChEBI" id="CHEBI:57540"/>
    </ligand>
</feature>
<feature type="binding site" evidence="1">
    <location>
        <position position="37"/>
    </location>
    <ligand>
        <name>nicotinamide</name>
        <dbReference type="ChEBI" id="CHEBI:17154"/>
    </ligand>
</feature>
<feature type="binding site" evidence="1">
    <location>
        <position position="38"/>
    </location>
    <ligand>
        <name>NAD(+)</name>
        <dbReference type="ChEBI" id="CHEBI:57540"/>
    </ligand>
</feature>
<feature type="binding site" evidence="1">
    <location>
        <position position="105"/>
    </location>
    <ligand>
        <name>NAD(+)</name>
        <dbReference type="ChEBI" id="CHEBI:57540"/>
    </ligand>
</feature>
<feature type="binding site" evidence="1">
    <location>
        <position position="107"/>
    </location>
    <ligand>
        <name>NAD(+)</name>
        <dbReference type="ChEBI" id="CHEBI:57540"/>
    </ligand>
</feature>
<feature type="binding site" evidence="1">
    <location>
        <position position="107"/>
    </location>
    <ligand>
        <name>nicotinamide</name>
        <dbReference type="ChEBI" id="CHEBI:17154"/>
    </ligand>
</feature>
<feature type="binding site" evidence="1">
    <location>
        <position position="108"/>
    </location>
    <ligand>
        <name>NAD(+)</name>
        <dbReference type="ChEBI" id="CHEBI:57540"/>
    </ligand>
</feature>
<feature type="binding site" evidence="1">
    <location>
        <position position="108"/>
    </location>
    <ligand>
        <name>nicotinamide</name>
        <dbReference type="ChEBI" id="CHEBI:17154"/>
    </ligand>
</feature>
<feature type="binding site" evidence="1">
    <location>
        <position position="123"/>
    </location>
    <ligand>
        <name>NAD(+)</name>
        <dbReference type="ChEBI" id="CHEBI:57540"/>
    </ligand>
</feature>
<feature type="binding site" evidence="1">
    <location>
        <position position="131"/>
    </location>
    <ligand>
        <name>Zn(2+)</name>
        <dbReference type="ChEBI" id="CHEBI:29105"/>
    </ligand>
</feature>
<feature type="binding site" evidence="1">
    <location>
        <position position="134"/>
    </location>
    <ligand>
        <name>Zn(2+)</name>
        <dbReference type="ChEBI" id="CHEBI:29105"/>
    </ligand>
</feature>
<feature type="binding site" evidence="1">
    <location>
        <position position="151"/>
    </location>
    <ligand>
        <name>Zn(2+)</name>
        <dbReference type="ChEBI" id="CHEBI:29105"/>
    </ligand>
</feature>
<feature type="binding site" evidence="1">
    <location>
        <position position="154"/>
    </location>
    <ligand>
        <name>Zn(2+)</name>
        <dbReference type="ChEBI" id="CHEBI:29105"/>
    </ligand>
</feature>
<feature type="binding site" evidence="1">
    <location>
        <position position="190"/>
    </location>
    <ligand>
        <name>NAD(+)</name>
        <dbReference type="ChEBI" id="CHEBI:57540"/>
    </ligand>
</feature>
<feature type="binding site" evidence="1">
    <location>
        <position position="191"/>
    </location>
    <ligand>
        <name>NAD(+)</name>
        <dbReference type="ChEBI" id="CHEBI:57540"/>
    </ligand>
</feature>
<feature type="binding site" evidence="1">
    <location>
        <position position="216"/>
    </location>
    <ligand>
        <name>NAD(+)</name>
        <dbReference type="ChEBI" id="CHEBI:57540"/>
    </ligand>
</feature>
<feature type="binding site" evidence="1">
    <location>
        <position position="234"/>
    </location>
    <ligand>
        <name>NAD(+)</name>
        <dbReference type="ChEBI" id="CHEBI:57540"/>
    </ligand>
</feature>
<organism>
    <name type="scientific">Bacillus cereus (strain ZK / E33L)</name>
    <dbReference type="NCBI Taxonomy" id="288681"/>
    <lineage>
        <taxon>Bacteria</taxon>
        <taxon>Bacillati</taxon>
        <taxon>Bacillota</taxon>
        <taxon>Bacilli</taxon>
        <taxon>Bacillales</taxon>
        <taxon>Bacillaceae</taxon>
        <taxon>Bacillus</taxon>
        <taxon>Bacillus cereus group</taxon>
    </lineage>
</organism>